<feature type="chain" id="PRO_0000181152" description="Large ribosomal subunit protein bL27">
    <location>
        <begin position="1"/>
        <end position="89"/>
    </location>
</feature>
<feature type="region of interest" description="Disordered" evidence="2">
    <location>
        <begin position="1"/>
        <end position="23"/>
    </location>
</feature>
<sequence length="89" mass="9490">MAHKKAGGSSRNGRDSESKRLGVKKFGGEAVIPGNIIVRQRGTKWHAGANVGLGKDHTIFALTTGNVDFRKKANGRVYVSVMPKAEAAE</sequence>
<proteinExistence type="inferred from homology"/>
<name>RL27_RHIME</name>
<comment type="similarity">
    <text evidence="1">Belongs to the bacterial ribosomal protein bL27 family.</text>
</comment>
<evidence type="ECO:0000255" key="1">
    <source>
        <dbReference type="HAMAP-Rule" id="MF_00539"/>
    </source>
</evidence>
<evidence type="ECO:0000256" key="2">
    <source>
        <dbReference type="SAM" id="MobiDB-lite"/>
    </source>
</evidence>
<evidence type="ECO:0000305" key="3"/>
<keyword id="KW-1185">Reference proteome</keyword>
<keyword id="KW-0687">Ribonucleoprotein</keyword>
<keyword id="KW-0689">Ribosomal protein</keyword>
<accession>Q92LB7</accession>
<organism>
    <name type="scientific">Rhizobium meliloti (strain 1021)</name>
    <name type="common">Ensifer meliloti</name>
    <name type="synonym">Sinorhizobium meliloti</name>
    <dbReference type="NCBI Taxonomy" id="266834"/>
    <lineage>
        <taxon>Bacteria</taxon>
        <taxon>Pseudomonadati</taxon>
        <taxon>Pseudomonadota</taxon>
        <taxon>Alphaproteobacteria</taxon>
        <taxon>Hyphomicrobiales</taxon>
        <taxon>Rhizobiaceae</taxon>
        <taxon>Sinorhizobium/Ensifer group</taxon>
        <taxon>Sinorhizobium</taxon>
    </lineage>
</organism>
<dbReference type="EMBL" id="AL591688">
    <property type="protein sequence ID" value="CAC47735.1"/>
    <property type="molecule type" value="Genomic_DNA"/>
</dbReference>
<dbReference type="RefSeq" id="NP_387262.1">
    <property type="nucleotide sequence ID" value="NC_003047.1"/>
</dbReference>
<dbReference type="RefSeq" id="WP_003531206.1">
    <property type="nucleotide sequence ID" value="NC_003047.1"/>
</dbReference>
<dbReference type="SMR" id="Q92LB7"/>
<dbReference type="EnsemblBacteria" id="CAC47735">
    <property type="protein sequence ID" value="CAC47735"/>
    <property type="gene ID" value="SMc03772"/>
</dbReference>
<dbReference type="GeneID" id="89574120"/>
<dbReference type="KEGG" id="sme:SMc03772"/>
<dbReference type="PATRIC" id="fig|266834.11.peg.4704"/>
<dbReference type="eggNOG" id="COG0211">
    <property type="taxonomic scope" value="Bacteria"/>
</dbReference>
<dbReference type="HOGENOM" id="CLU_095424_4_1_5"/>
<dbReference type="OrthoDB" id="9803474at2"/>
<dbReference type="Proteomes" id="UP000001976">
    <property type="component" value="Chromosome"/>
</dbReference>
<dbReference type="GO" id="GO:0022625">
    <property type="term" value="C:cytosolic large ribosomal subunit"/>
    <property type="evidence" value="ECO:0007669"/>
    <property type="project" value="TreeGrafter"/>
</dbReference>
<dbReference type="GO" id="GO:0003735">
    <property type="term" value="F:structural constituent of ribosome"/>
    <property type="evidence" value="ECO:0007669"/>
    <property type="project" value="InterPro"/>
</dbReference>
<dbReference type="GO" id="GO:0006412">
    <property type="term" value="P:translation"/>
    <property type="evidence" value="ECO:0007669"/>
    <property type="project" value="UniProtKB-UniRule"/>
</dbReference>
<dbReference type="FunFam" id="2.40.50.100:FF:000020">
    <property type="entry name" value="50S ribosomal protein L27"/>
    <property type="match status" value="1"/>
</dbReference>
<dbReference type="Gene3D" id="2.40.50.100">
    <property type="match status" value="1"/>
</dbReference>
<dbReference type="HAMAP" id="MF_00539">
    <property type="entry name" value="Ribosomal_bL27"/>
    <property type="match status" value="1"/>
</dbReference>
<dbReference type="InterPro" id="IPR001684">
    <property type="entry name" value="Ribosomal_bL27"/>
</dbReference>
<dbReference type="InterPro" id="IPR018261">
    <property type="entry name" value="Ribosomal_bL27_CS"/>
</dbReference>
<dbReference type="NCBIfam" id="TIGR00062">
    <property type="entry name" value="L27"/>
    <property type="match status" value="1"/>
</dbReference>
<dbReference type="PANTHER" id="PTHR15893:SF0">
    <property type="entry name" value="LARGE RIBOSOMAL SUBUNIT PROTEIN BL27M"/>
    <property type="match status" value="1"/>
</dbReference>
<dbReference type="PANTHER" id="PTHR15893">
    <property type="entry name" value="RIBOSOMAL PROTEIN L27"/>
    <property type="match status" value="1"/>
</dbReference>
<dbReference type="Pfam" id="PF01016">
    <property type="entry name" value="Ribosomal_L27"/>
    <property type="match status" value="1"/>
</dbReference>
<dbReference type="PRINTS" id="PR00063">
    <property type="entry name" value="RIBOSOMALL27"/>
</dbReference>
<dbReference type="SUPFAM" id="SSF110324">
    <property type="entry name" value="Ribosomal L27 protein-like"/>
    <property type="match status" value="1"/>
</dbReference>
<dbReference type="PROSITE" id="PS00831">
    <property type="entry name" value="RIBOSOMAL_L27"/>
    <property type="match status" value="1"/>
</dbReference>
<gene>
    <name evidence="1" type="primary">rpmA</name>
    <name type="ordered locus">R03156</name>
    <name type="ORF">SMc03772</name>
</gene>
<reference key="1">
    <citation type="journal article" date="2001" name="Proc. Natl. Acad. Sci. U.S.A.">
        <title>Analysis of the chromosome sequence of the legume symbiont Sinorhizobium meliloti strain 1021.</title>
        <authorList>
            <person name="Capela D."/>
            <person name="Barloy-Hubler F."/>
            <person name="Gouzy J."/>
            <person name="Bothe G."/>
            <person name="Ampe F."/>
            <person name="Batut J."/>
            <person name="Boistard P."/>
            <person name="Becker A."/>
            <person name="Boutry M."/>
            <person name="Cadieu E."/>
            <person name="Dreano S."/>
            <person name="Gloux S."/>
            <person name="Godrie T."/>
            <person name="Goffeau A."/>
            <person name="Kahn D."/>
            <person name="Kiss E."/>
            <person name="Lelaure V."/>
            <person name="Masuy D."/>
            <person name="Pohl T."/>
            <person name="Portetelle D."/>
            <person name="Puehler A."/>
            <person name="Purnelle B."/>
            <person name="Ramsperger U."/>
            <person name="Renard C."/>
            <person name="Thebault P."/>
            <person name="Vandenbol M."/>
            <person name="Weidner S."/>
            <person name="Galibert F."/>
        </authorList>
    </citation>
    <scope>NUCLEOTIDE SEQUENCE [LARGE SCALE GENOMIC DNA]</scope>
    <source>
        <strain>1021</strain>
    </source>
</reference>
<reference key="2">
    <citation type="journal article" date="2001" name="Science">
        <title>The composite genome of the legume symbiont Sinorhizobium meliloti.</title>
        <authorList>
            <person name="Galibert F."/>
            <person name="Finan T.M."/>
            <person name="Long S.R."/>
            <person name="Puehler A."/>
            <person name="Abola P."/>
            <person name="Ampe F."/>
            <person name="Barloy-Hubler F."/>
            <person name="Barnett M.J."/>
            <person name="Becker A."/>
            <person name="Boistard P."/>
            <person name="Bothe G."/>
            <person name="Boutry M."/>
            <person name="Bowser L."/>
            <person name="Buhrmester J."/>
            <person name="Cadieu E."/>
            <person name="Capela D."/>
            <person name="Chain P."/>
            <person name="Cowie A."/>
            <person name="Davis R.W."/>
            <person name="Dreano S."/>
            <person name="Federspiel N.A."/>
            <person name="Fisher R.F."/>
            <person name="Gloux S."/>
            <person name="Godrie T."/>
            <person name="Goffeau A."/>
            <person name="Golding B."/>
            <person name="Gouzy J."/>
            <person name="Gurjal M."/>
            <person name="Hernandez-Lucas I."/>
            <person name="Hong A."/>
            <person name="Huizar L."/>
            <person name="Hyman R.W."/>
            <person name="Jones T."/>
            <person name="Kahn D."/>
            <person name="Kahn M.L."/>
            <person name="Kalman S."/>
            <person name="Keating D.H."/>
            <person name="Kiss E."/>
            <person name="Komp C."/>
            <person name="Lelaure V."/>
            <person name="Masuy D."/>
            <person name="Palm C."/>
            <person name="Peck M.C."/>
            <person name="Pohl T.M."/>
            <person name="Portetelle D."/>
            <person name="Purnelle B."/>
            <person name="Ramsperger U."/>
            <person name="Surzycki R."/>
            <person name="Thebault P."/>
            <person name="Vandenbol M."/>
            <person name="Vorhoelter F.J."/>
            <person name="Weidner S."/>
            <person name="Wells D.H."/>
            <person name="Wong K."/>
            <person name="Yeh K.-C."/>
            <person name="Batut J."/>
        </authorList>
    </citation>
    <scope>NUCLEOTIDE SEQUENCE [LARGE SCALE GENOMIC DNA]</scope>
    <source>
        <strain>1021</strain>
    </source>
</reference>
<protein>
    <recommendedName>
        <fullName evidence="1">Large ribosomal subunit protein bL27</fullName>
    </recommendedName>
    <alternativeName>
        <fullName evidence="3">50S ribosomal protein L27</fullName>
    </alternativeName>
</protein>